<evidence type="ECO:0000250" key="1"/>
<evidence type="ECO:0000255" key="2">
    <source>
        <dbReference type="PROSITE-ProRule" id="PRU00159"/>
    </source>
</evidence>
<evidence type="ECO:0000255" key="3">
    <source>
        <dbReference type="PROSITE-ProRule" id="PRU00618"/>
    </source>
</evidence>
<evidence type="ECO:0000255" key="4">
    <source>
        <dbReference type="PROSITE-ProRule" id="PRU10027"/>
    </source>
</evidence>
<evidence type="ECO:0000269" key="5">
    <source>
    </source>
</evidence>
<evidence type="ECO:0000269" key="6">
    <source>
    </source>
</evidence>
<evidence type="ECO:0000303" key="7">
    <source>
    </source>
</evidence>
<evidence type="ECO:0000305" key="8"/>
<evidence type="ECO:0000305" key="9">
    <source>
    </source>
</evidence>
<dbReference type="EC" id="2.7.11.11" evidence="9"/>
<dbReference type="EMBL" id="M18655">
    <property type="protein sequence ID" value="AAA28412.1"/>
    <property type="molecule type" value="Genomic_DNA"/>
</dbReference>
<dbReference type="EMBL" id="X16969">
    <property type="protein sequence ID" value="CAA34840.1"/>
    <property type="molecule type" value="Genomic_DNA"/>
</dbReference>
<dbReference type="EMBL" id="AE014134">
    <property type="protein sequence ID" value="AAF52797.1"/>
    <property type="molecule type" value="Genomic_DNA"/>
</dbReference>
<dbReference type="EMBL" id="AE014134">
    <property type="protein sequence ID" value="AAN10703.1"/>
    <property type="molecule type" value="Genomic_DNA"/>
</dbReference>
<dbReference type="EMBL" id="AE014134">
    <property type="protein sequence ID" value="AAS64669.1"/>
    <property type="molecule type" value="Genomic_DNA"/>
</dbReference>
<dbReference type="EMBL" id="AY069425">
    <property type="protein sequence ID" value="AAL39570.1"/>
    <property type="molecule type" value="mRNA"/>
</dbReference>
<dbReference type="PIR" id="C31751">
    <property type="entry name" value="C31751"/>
</dbReference>
<dbReference type="RefSeq" id="NP_476977.1">
    <property type="nucleotide sequence ID" value="NM_057629.4"/>
</dbReference>
<dbReference type="RefSeq" id="NP_723479.1">
    <property type="nucleotide sequence ID" value="NM_164866.3"/>
</dbReference>
<dbReference type="RefSeq" id="NP_995672.1">
    <property type="nucleotide sequence ID" value="NM_205950.3"/>
</dbReference>
<dbReference type="SMR" id="P12370"/>
<dbReference type="BioGRID" id="60383">
    <property type="interactions" value="23"/>
</dbReference>
<dbReference type="DIP" id="DIP-23727N"/>
<dbReference type="FunCoup" id="P12370">
    <property type="interactions" value="875"/>
</dbReference>
<dbReference type="IntAct" id="P12370">
    <property type="interactions" value="10"/>
</dbReference>
<dbReference type="MINT" id="P12370"/>
<dbReference type="STRING" id="7227.FBpp0089382"/>
<dbReference type="PaxDb" id="7227-FBpp0079448"/>
<dbReference type="EnsemblMetazoa" id="FBtr0079851">
    <property type="protein sequence ID" value="FBpp0079448"/>
    <property type="gene ID" value="FBgn0000273"/>
</dbReference>
<dbReference type="EnsemblMetazoa" id="FBtr0079852">
    <property type="protein sequence ID" value="FBpp0089382"/>
    <property type="gene ID" value="FBgn0000273"/>
</dbReference>
<dbReference type="EnsemblMetazoa" id="FBtr0335495">
    <property type="protein sequence ID" value="FBpp0307466"/>
    <property type="gene ID" value="FBgn0000273"/>
</dbReference>
<dbReference type="GeneID" id="34284"/>
<dbReference type="KEGG" id="dme:Dmel_CG4379"/>
<dbReference type="UCSC" id="CG4379-RB">
    <property type="organism name" value="d. melanogaster"/>
</dbReference>
<dbReference type="AGR" id="FB:FBgn0000273"/>
<dbReference type="CTD" id="34284"/>
<dbReference type="FlyBase" id="FBgn0000273">
    <property type="gene designation" value="Pka-C1"/>
</dbReference>
<dbReference type="VEuPathDB" id="VectorBase:FBgn0000273"/>
<dbReference type="eggNOG" id="KOG0616">
    <property type="taxonomic scope" value="Eukaryota"/>
</dbReference>
<dbReference type="GeneTree" id="ENSGT00940000163111"/>
<dbReference type="HOGENOM" id="CLU_000288_63_5_1"/>
<dbReference type="InParanoid" id="P12370"/>
<dbReference type="OMA" id="NDPFFDW"/>
<dbReference type="OrthoDB" id="63267at2759"/>
<dbReference type="PhylomeDB" id="P12370"/>
<dbReference type="BRENDA" id="2.7.11.11">
    <property type="organism ID" value="1994"/>
</dbReference>
<dbReference type="Reactome" id="R-DME-163615">
    <property type="pathway name" value="PKA activation"/>
</dbReference>
<dbReference type="Reactome" id="R-DME-164378">
    <property type="pathway name" value="PKA activation in glucagon signalling"/>
</dbReference>
<dbReference type="Reactome" id="R-DME-180024">
    <property type="pathway name" value="DARPP-32 events"/>
</dbReference>
<dbReference type="Reactome" id="R-DME-209159">
    <property type="pathway name" value="Assembly of the CI containing complexes"/>
</dbReference>
<dbReference type="Reactome" id="R-DME-209190">
    <property type="pathway name" value="Phosphorylation of CI"/>
</dbReference>
<dbReference type="Reactome" id="R-DME-209360">
    <property type="pathway name" value="Ubiquitination and proteolysis of phosphorylated CI"/>
</dbReference>
<dbReference type="Reactome" id="R-DME-381676">
    <property type="pathway name" value="Glucagon-like Peptide-1 (GLP1) regulates insulin secretion"/>
</dbReference>
<dbReference type="Reactome" id="R-DME-392517">
    <property type="pathway name" value="Rap1 signalling"/>
</dbReference>
<dbReference type="Reactome" id="R-DME-422356">
    <property type="pathway name" value="Regulation of insulin secretion"/>
</dbReference>
<dbReference type="Reactome" id="R-DME-432040">
    <property type="pathway name" value="Vasopressin regulates renal water homeostasis via Aquaporins"/>
</dbReference>
<dbReference type="Reactome" id="R-DME-4420097">
    <property type="pathway name" value="VEGFA-VEGFR2 Pathway"/>
</dbReference>
<dbReference type="Reactome" id="R-DME-442720">
    <property type="pathway name" value="CREB1 phosphorylation through the activation of Adenylate Cyclase"/>
</dbReference>
<dbReference type="Reactome" id="R-DME-5578775">
    <property type="pathway name" value="Ion homeostasis"/>
</dbReference>
<dbReference type="Reactome" id="R-DME-5610785">
    <property type="pathway name" value="GLI3 is processed to GLI3R by the proteasome"/>
</dbReference>
<dbReference type="Reactome" id="R-DME-5610787">
    <property type="pathway name" value="Hedgehog 'off' state"/>
</dbReference>
<dbReference type="Reactome" id="R-DME-5621575">
    <property type="pathway name" value="CD209 (DC-SIGN) signaling"/>
</dbReference>
<dbReference type="Reactome" id="R-DME-8963896">
    <property type="pathway name" value="HDL assembly"/>
</dbReference>
<dbReference type="Reactome" id="R-DME-9634597">
    <property type="pathway name" value="GPER1 signaling"/>
</dbReference>
<dbReference type="Reactome" id="R-DME-983231">
    <property type="pathway name" value="Factors involved in megakaryocyte development and platelet production"/>
</dbReference>
<dbReference type="Reactome" id="R-DME-9837999">
    <property type="pathway name" value="Mitochondrial protein degradation"/>
</dbReference>
<dbReference type="Reactome" id="R-DME-9856530">
    <property type="pathway name" value="High laminar flow shear stress activates signaling by PIEZO1 and PECAM1:CDH5:KDR in endothelial cells"/>
</dbReference>
<dbReference type="SignaLink" id="P12370"/>
<dbReference type="BioGRID-ORCS" id="34284">
    <property type="hits" value="0 hits in 3 CRISPR screens"/>
</dbReference>
<dbReference type="GenomeRNAi" id="34284"/>
<dbReference type="PRO" id="PR:P12370"/>
<dbReference type="Proteomes" id="UP000000803">
    <property type="component" value="Chromosome 2L"/>
</dbReference>
<dbReference type="Bgee" id="FBgn0000273">
    <property type="expression patterns" value="Expressed in adult gamma Kenyon cell in brain and 284 other cell types or tissues"/>
</dbReference>
<dbReference type="GO" id="GO:0005952">
    <property type="term" value="C:cAMP-dependent protein kinase complex"/>
    <property type="evidence" value="ECO:0000318"/>
    <property type="project" value="GO_Central"/>
</dbReference>
<dbReference type="GO" id="GO:0044297">
    <property type="term" value="C:cell body"/>
    <property type="evidence" value="ECO:0000314"/>
    <property type="project" value="FlyBase"/>
</dbReference>
<dbReference type="GO" id="GO:0005829">
    <property type="term" value="C:cytosol"/>
    <property type="evidence" value="ECO:0000314"/>
    <property type="project" value="FlyBase"/>
</dbReference>
<dbReference type="GO" id="GO:0030425">
    <property type="term" value="C:dendrite"/>
    <property type="evidence" value="ECO:0000314"/>
    <property type="project" value="FlyBase"/>
</dbReference>
<dbReference type="GO" id="GO:0005759">
    <property type="term" value="C:mitochondrial matrix"/>
    <property type="evidence" value="ECO:0000314"/>
    <property type="project" value="FlyBase"/>
</dbReference>
<dbReference type="GO" id="GO:0043005">
    <property type="term" value="C:neuron projection"/>
    <property type="evidence" value="ECO:0000314"/>
    <property type="project" value="FlyBase"/>
</dbReference>
<dbReference type="GO" id="GO:0043025">
    <property type="term" value="C:neuronal cell body"/>
    <property type="evidence" value="ECO:0000314"/>
    <property type="project" value="FlyBase"/>
</dbReference>
<dbReference type="GO" id="GO:0005634">
    <property type="term" value="C:nucleus"/>
    <property type="evidence" value="ECO:0000318"/>
    <property type="project" value="GO_Central"/>
</dbReference>
<dbReference type="GO" id="GO:0005886">
    <property type="term" value="C:plasma membrane"/>
    <property type="evidence" value="ECO:0000314"/>
    <property type="project" value="FlyBase"/>
</dbReference>
<dbReference type="GO" id="GO:0005524">
    <property type="term" value="F:ATP binding"/>
    <property type="evidence" value="ECO:0007669"/>
    <property type="project" value="UniProtKB-KW"/>
</dbReference>
<dbReference type="GO" id="GO:0004691">
    <property type="term" value="F:cAMP-dependent protein kinase activity"/>
    <property type="evidence" value="ECO:0000315"/>
    <property type="project" value="FlyBase"/>
</dbReference>
<dbReference type="GO" id="GO:0106310">
    <property type="term" value="F:protein serine kinase activity"/>
    <property type="evidence" value="ECO:0007669"/>
    <property type="project" value="RHEA"/>
</dbReference>
<dbReference type="GO" id="GO:0004674">
    <property type="term" value="F:protein serine/threonine kinase activity"/>
    <property type="evidence" value="ECO:0000314"/>
    <property type="project" value="FlyBase"/>
</dbReference>
<dbReference type="GO" id="GO:0007615">
    <property type="term" value="P:anesthesia-resistant memory"/>
    <property type="evidence" value="ECO:0000315"/>
    <property type="project" value="FlyBase"/>
</dbReference>
<dbReference type="GO" id="GO:0007448">
    <property type="term" value="P:anterior/posterior pattern specification, imaginal disc"/>
    <property type="evidence" value="ECO:0000315"/>
    <property type="project" value="FlyBase"/>
</dbReference>
<dbReference type="GO" id="GO:0019933">
    <property type="term" value="P:cAMP-mediated signaling"/>
    <property type="evidence" value="ECO:0000304"/>
    <property type="project" value="FlyBase"/>
</dbReference>
<dbReference type="GO" id="GO:0071361">
    <property type="term" value="P:cellular response to ethanol"/>
    <property type="evidence" value="ECO:0000315"/>
    <property type="project" value="UniProtKB"/>
</dbReference>
<dbReference type="GO" id="GO:0007476">
    <property type="term" value="P:imaginal disc-derived wing morphogenesis"/>
    <property type="evidence" value="ECO:0000315"/>
    <property type="project" value="FlyBase"/>
</dbReference>
<dbReference type="GO" id="GO:0050804">
    <property type="term" value="P:modulation of chemical synaptic transmission"/>
    <property type="evidence" value="ECO:0000315"/>
    <property type="project" value="FlyBase"/>
</dbReference>
<dbReference type="GO" id="GO:0090298">
    <property type="term" value="P:negative regulation of mitochondrial DNA replication"/>
    <property type="evidence" value="ECO:0000314"/>
    <property type="project" value="FlyBase"/>
</dbReference>
<dbReference type="GO" id="GO:0046823">
    <property type="term" value="P:negative regulation of nucleocytoplasmic transport"/>
    <property type="evidence" value="ECO:0000316"/>
    <property type="project" value="FlyBase"/>
</dbReference>
<dbReference type="GO" id="GO:0045879">
    <property type="term" value="P:negative regulation of smoothened signaling pathway"/>
    <property type="evidence" value="ECO:0000314"/>
    <property type="project" value="FlyBase"/>
</dbReference>
<dbReference type="GO" id="GO:0042048">
    <property type="term" value="P:olfactory behavior"/>
    <property type="evidence" value="ECO:0000315"/>
    <property type="project" value="FlyBase"/>
</dbReference>
<dbReference type="GO" id="GO:0008355">
    <property type="term" value="P:olfactory learning"/>
    <property type="evidence" value="ECO:0000315"/>
    <property type="project" value="FlyBase"/>
</dbReference>
<dbReference type="GO" id="GO:0007314">
    <property type="term" value="P:oocyte anterior/posterior axis specification"/>
    <property type="evidence" value="ECO:0000315"/>
    <property type="project" value="FlyBase"/>
</dbReference>
<dbReference type="GO" id="GO:0008103">
    <property type="term" value="P:oocyte microtubule cytoskeleton polarization"/>
    <property type="evidence" value="ECO:0000315"/>
    <property type="project" value="FlyBase"/>
</dbReference>
<dbReference type="GO" id="GO:0048477">
    <property type="term" value="P:oogenesis"/>
    <property type="evidence" value="ECO:0000315"/>
    <property type="project" value="FlyBase"/>
</dbReference>
<dbReference type="GO" id="GO:1905866">
    <property type="term" value="P:positive regulation of Atg1/ULK1 kinase complex assembly"/>
    <property type="evidence" value="ECO:0000315"/>
    <property type="project" value="FlyBase"/>
</dbReference>
<dbReference type="GO" id="GO:0010628">
    <property type="term" value="P:positive regulation of gene expression"/>
    <property type="evidence" value="ECO:0000315"/>
    <property type="project" value="UniProtKB"/>
</dbReference>
<dbReference type="GO" id="GO:0035332">
    <property type="term" value="P:positive regulation of hippo signaling"/>
    <property type="evidence" value="ECO:0000315"/>
    <property type="project" value="FlyBase"/>
</dbReference>
<dbReference type="GO" id="GO:0032436">
    <property type="term" value="P:positive regulation of proteasomal ubiquitin-dependent protein catabolic process"/>
    <property type="evidence" value="ECO:0000315"/>
    <property type="project" value="FlyBase"/>
</dbReference>
<dbReference type="GO" id="GO:0045880">
    <property type="term" value="P:positive regulation of smoothened signaling pathway"/>
    <property type="evidence" value="ECO:0000314"/>
    <property type="project" value="FlyBase"/>
</dbReference>
<dbReference type="GO" id="GO:0032956">
    <property type="term" value="P:regulation of actin cytoskeleton organization"/>
    <property type="evidence" value="ECO:0000315"/>
    <property type="project" value="UniProtKB"/>
</dbReference>
<dbReference type="GO" id="GO:0042981">
    <property type="term" value="P:regulation of apoptotic process"/>
    <property type="evidence" value="ECO:0000316"/>
    <property type="project" value="FlyBase"/>
</dbReference>
<dbReference type="GO" id="GO:0008359">
    <property type="term" value="P:regulation of bicoid mRNA localization"/>
    <property type="evidence" value="ECO:0000315"/>
    <property type="project" value="FlyBase"/>
</dbReference>
<dbReference type="GO" id="GO:0045187">
    <property type="term" value="P:regulation of circadian sleep/wake cycle, sleep"/>
    <property type="evidence" value="ECO:0000315"/>
    <property type="project" value="FlyBase"/>
</dbReference>
<dbReference type="GO" id="GO:0007317">
    <property type="term" value="P:regulation of pole plasm oskar mRNA localization"/>
    <property type="evidence" value="ECO:0000315"/>
    <property type="project" value="FlyBase"/>
</dbReference>
<dbReference type="GO" id="GO:0007622">
    <property type="term" value="P:rhythmic behavior"/>
    <property type="evidence" value="ECO:0000315"/>
    <property type="project" value="FlyBase"/>
</dbReference>
<dbReference type="GO" id="GO:0007165">
    <property type="term" value="P:signal transduction"/>
    <property type="evidence" value="ECO:0000318"/>
    <property type="project" value="GO_Central"/>
</dbReference>
<dbReference type="GO" id="GO:0048682">
    <property type="term" value="P:sprouting of injured axon"/>
    <property type="evidence" value="ECO:0000315"/>
    <property type="project" value="FlyBase"/>
</dbReference>
<dbReference type="GO" id="GO:0040040">
    <property type="term" value="P:thermosensory behavior"/>
    <property type="evidence" value="ECO:0000315"/>
    <property type="project" value="FlyBase"/>
</dbReference>
<dbReference type="CDD" id="cd14209">
    <property type="entry name" value="STKc_PKA"/>
    <property type="match status" value="1"/>
</dbReference>
<dbReference type="FunFam" id="3.30.200.20:FF:000005">
    <property type="entry name" value="cAMP-dependent protein kinase catalytic subunit"/>
    <property type="match status" value="1"/>
</dbReference>
<dbReference type="FunFam" id="1.10.510.10:FF:000005">
    <property type="entry name" value="cAMP-dependent protein kinase catalytic subunit alpha"/>
    <property type="match status" value="1"/>
</dbReference>
<dbReference type="Gene3D" id="3.30.200.20">
    <property type="entry name" value="Phosphorylase Kinase, domain 1"/>
    <property type="match status" value="1"/>
</dbReference>
<dbReference type="Gene3D" id="1.10.510.10">
    <property type="entry name" value="Transferase(Phosphotransferase) domain 1"/>
    <property type="match status" value="1"/>
</dbReference>
<dbReference type="InterPro" id="IPR000961">
    <property type="entry name" value="AGC-kinase_C"/>
</dbReference>
<dbReference type="InterPro" id="IPR011009">
    <property type="entry name" value="Kinase-like_dom_sf"/>
</dbReference>
<dbReference type="InterPro" id="IPR000719">
    <property type="entry name" value="Prot_kinase_dom"/>
</dbReference>
<dbReference type="InterPro" id="IPR017441">
    <property type="entry name" value="Protein_kinase_ATP_BS"/>
</dbReference>
<dbReference type="InterPro" id="IPR008271">
    <property type="entry name" value="Ser/Thr_kinase_AS"/>
</dbReference>
<dbReference type="InterPro" id="IPR044109">
    <property type="entry name" value="STKc_PKA"/>
</dbReference>
<dbReference type="PANTHER" id="PTHR24353:SF153">
    <property type="entry name" value="CAMP-DEPENDENT PROTEIN KINASE CATALYTIC SUBUNIT 1"/>
    <property type="match status" value="1"/>
</dbReference>
<dbReference type="PANTHER" id="PTHR24353">
    <property type="entry name" value="CYCLIC NUCLEOTIDE-DEPENDENT PROTEIN KINASE"/>
    <property type="match status" value="1"/>
</dbReference>
<dbReference type="Pfam" id="PF00069">
    <property type="entry name" value="Pkinase"/>
    <property type="match status" value="1"/>
</dbReference>
<dbReference type="SMART" id="SM00133">
    <property type="entry name" value="S_TK_X"/>
    <property type="match status" value="1"/>
</dbReference>
<dbReference type="SMART" id="SM00220">
    <property type="entry name" value="S_TKc"/>
    <property type="match status" value="1"/>
</dbReference>
<dbReference type="SUPFAM" id="SSF56112">
    <property type="entry name" value="Protein kinase-like (PK-like)"/>
    <property type="match status" value="1"/>
</dbReference>
<dbReference type="PROSITE" id="PS51285">
    <property type="entry name" value="AGC_KINASE_CTER"/>
    <property type="match status" value="1"/>
</dbReference>
<dbReference type="PROSITE" id="PS00107">
    <property type="entry name" value="PROTEIN_KINASE_ATP"/>
    <property type="match status" value="1"/>
</dbReference>
<dbReference type="PROSITE" id="PS50011">
    <property type="entry name" value="PROTEIN_KINASE_DOM"/>
    <property type="match status" value="1"/>
</dbReference>
<dbReference type="PROSITE" id="PS00108">
    <property type="entry name" value="PROTEIN_KINASE_ST"/>
    <property type="match status" value="1"/>
</dbReference>
<comment type="function">
    <text evidence="5 6">Serine/threonine-protein kinase involved in memory formation (PubMed:29473541). Promotes long-term memory by phosphorylating meng and by regulating CrebB protein stability and activity (PubMed:29473541). As part of ethanol response in the glia, mediates ethanol-induced structural remodeling of actin cytoskeleton and perineurial membrane topology when anchored to the membrane (PubMed:29444420).</text>
</comment>
<comment type="catalytic activity">
    <reaction evidence="9">
        <text>L-seryl-[protein] + ATP = O-phospho-L-seryl-[protein] + ADP + H(+)</text>
        <dbReference type="Rhea" id="RHEA:17989"/>
        <dbReference type="Rhea" id="RHEA-COMP:9863"/>
        <dbReference type="Rhea" id="RHEA-COMP:11604"/>
        <dbReference type="ChEBI" id="CHEBI:15378"/>
        <dbReference type="ChEBI" id="CHEBI:29999"/>
        <dbReference type="ChEBI" id="CHEBI:30616"/>
        <dbReference type="ChEBI" id="CHEBI:83421"/>
        <dbReference type="ChEBI" id="CHEBI:456216"/>
        <dbReference type="EC" id="2.7.11.11"/>
    </reaction>
</comment>
<comment type="catalytic activity">
    <reaction evidence="9">
        <text>L-threonyl-[protein] + ATP = O-phospho-L-threonyl-[protein] + ADP + H(+)</text>
        <dbReference type="Rhea" id="RHEA:46608"/>
        <dbReference type="Rhea" id="RHEA-COMP:11060"/>
        <dbReference type="Rhea" id="RHEA-COMP:11605"/>
        <dbReference type="ChEBI" id="CHEBI:15378"/>
        <dbReference type="ChEBI" id="CHEBI:30013"/>
        <dbReference type="ChEBI" id="CHEBI:30616"/>
        <dbReference type="ChEBI" id="CHEBI:61977"/>
        <dbReference type="ChEBI" id="CHEBI:456216"/>
        <dbReference type="EC" id="2.7.11.11"/>
    </reaction>
</comment>
<comment type="activity regulation">
    <text>Activated by cAMP.</text>
</comment>
<comment type="subunit">
    <text>Composed of two regulatory chains and two catalytic chains.</text>
</comment>
<comment type="interaction">
    <interactant intactId="EBI-82224">
        <id>P12370</id>
    </interactant>
    <interactant intactId="EBI-132069">
        <id>Q9VT65</id>
        <label>CalpB</label>
    </interactant>
    <organismsDiffer>false</organismsDiffer>
    <experiments>2</experiments>
</comment>
<comment type="interaction">
    <interactant intactId="EBI-82224">
        <id>P12370</id>
    </interactant>
    <interactant intactId="EBI-426805">
        <id>Q03720</id>
        <label>slo</label>
    </interactant>
    <organismsDiffer>false</organismsDiffer>
    <experiments>5</experiments>
</comment>
<comment type="tissue specificity">
    <text>More abundant in adult head than adult body.</text>
</comment>
<comment type="similarity">
    <text evidence="8">Belongs to the protein kinase superfamily. AGC Ser/Thr protein kinase family. cAMP subfamily.</text>
</comment>
<organism>
    <name type="scientific">Drosophila melanogaster</name>
    <name type="common">Fruit fly</name>
    <dbReference type="NCBI Taxonomy" id="7227"/>
    <lineage>
        <taxon>Eukaryota</taxon>
        <taxon>Metazoa</taxon>
        <taxon>Ecdysozoa</taxon>
        <taxon>Arthropoda</taxon>
        <taxon>Hexapoda</taxon>
        <taxon>Insecta</taxon>
        <taxon>Pterygota</taxon>
        <taxon>Neoptera</taxon>
        <taxon>Endopterygota</taxon>
        <taxon>Diptera</taxon>
        <taxon>Brachycera</taxon>
        <taxon>Muscomorpha</taxon>
        <taxon>Ephydroidea</taxon>
        <taxon>Drosophilidae</taxon>
        <taxon>Drosophila</taxon>
        <taxon>Sophophora</taxon>
    </lineage>
</organism>
<name>KAPC1_DROME</name>
<proteinExistence type="evidence at protein level"/>
<reference key="1">
    <citation type="journal article" date="1988" name="J. Biol. Chem.">
        <title>Cloning, sequence, and expression of the Drosophila cAMP-dependent protein kinase catalytic subunit gene.</title>
        <authorList>
            <person name="Foster J.L."/>
            <person name="Higgins G.C."/>
            <person name="Jackson R.F."/>
        </authorList>
    </citation>
    <scope>NUCLEOTIDE SEQUENCE [GENOMIC DNA]</scope>
</reference>
<reference key="2">
    <citation type="journal article" date="1988" name="Genes Dev.">
        <title>Isolation and characterization of Drosophila cAMP-dependent protein kinase genes.</title>
        <authorList>
            <person name="Kalderon D."/>
            <person name="Rubin G.M."/>
        </authorList>
    </citation>
    <scope>NUCLEOTIDE SEQUENCE [GENOMIC DNA]</scope>
    <source>
        <strain>Canton-S</strain>
    </source>
</reference>
<reference key="3">
    <citation type="journal article" date="2000" name="Science">
        <title>The genome sequence of Drosophila melanogaster.</title>
        <authorList>
            <person name="Adams M.D."/>
            <person name="Celniker S.E."/>
            <person name="Holt R.A."/>
            <person name="Evans C.A."/>
            <person name="Gocayne J.D."/>
            <person name="Amanatides P.G."/>
            <person name="Scherer S.E."/>
            <person name="Li P.W."/>
            <person name="Hoskins R.A."/>
            <person name="Galle R.F."/>
            <person name="George R.A."/>
            <person name="Lewis S.E."/>
            <person name="Richards S."/>
            <person name="Ashburner M."/>
            <person name="Henderson S.N."/>
            <person name="Sutton G.G."/>
            <person name="Wortman J.R."/>
            <person name="Yandell M.D."/>
            <person name="Zhang Q."/>
            <person name="Chen L.X."/>
            <person name="Brandon R.C."/>
            <person name="Rogers Y.-H.C."/>
            <person name="Blazej R.G."/>
            <person name="Champe M."/>
            <person name="Pfeiffer B.D."/>
            <person name="Wan K.H."/>
            <person name="Doyle C."/>
            <person name="Baxter E.G."/>
            <person name="Helt G."/>
            <person name="Nelson C.R."/>
            <person name="Miklos G.L.G."/>
            <person name="Abril J.F."/>
            <person name="Agbayani A."/>
            <person name="An H.-J."/>
            <person name="Andrews-Pfannkoch C."/>
            <person name="Baldwin D."/>
            <person name="Ballew R.M."/>
            <person name="Basu A."/>
            <person name="Baxendale J."/>
            <person name="Bayraktaroglu L."/>
            <person name="Beasley E.M."/>
            <person name="Beeson K.Y."/>
            <person name="Benos P.V."/>
            <person name="Berman B.P."/>
            <person name="Bhandari D."/>
            <person name="Bolshakov S."/>
            <person name="Borkova D."/>
            <person name="Botchan M.R."/>
            <person name="Bouck J."/>
            <person name="Brokstein P."/>
            <person name="Brottier P."/>
            <person name="Burtis K.C."/>
            <person name="Busam D.A."/>
            <person name="Butler H."/>
            <person name="Cadieu E."/>
            <person name="Center A."/>
            <person name="Chandra I."/>
            <person name="Cherry J.M."/>
            <person name="Cawley S."/>
            <person name="Dahlke C."/>
            <person name="Davenport L.B."/>
            <person name="Davies P."/>
            <person name="de Pablos B."/>
            <person name="Delcher A."/>
            <person name="Deng Z."/>
            <person name="Mays A.D."/>
            <person name="Dew I."/>
            <person name="Dietz S.M."/>
            <person name="Dodson K."/>
            <person name="Doup L.E."/>
            <person name="Downes M."/>
            <person name="Dugan-Rocha S."/>
            <person name="Dunkov B.C."/>
            <person name="Dunn P."/>
            <person name="Durbin K.J."/>
            <person name="Evangelista C.C."/>
            <person name="Ferraz C."/>
            <person name="Ferriera S."/>
            <person name="Fleischmann W."/>
            <person name="Fosler C."/>
            <person name="Gabrielian A.E."/>
            <person name="Garg N.S."/>
            <person name="Gelbart W.M."/>
            <person name="Glasser K."/>
            <person name="Glodek A."/>
            <person name="Gong F."/>
            <person name="Gorrell J.H."/>
            <person name="Gu Z."/>
            <person name="Guan P."/>
            <person name="Harris M."/>
            <person name="Harris N.L."/>
            <person name="Harvey D.A."/>
            <person name="Heiman T.J."/>
            <person name="Hernandez J.R."/>
            <person name="Houck J."/>
            <person name="Hostin D."/>
            <person name="Houston K.A."/>
            <person name="Howland T.J."/>
            <person name="Wei M.-H."/>
            <person name="Ibegwam C."/>
            <person name="Jalali M."/>
            <person name="Kalush F."/>
            <person name="Karpen G.H."/>
            <person name="Ke Z."/>
            <person name="Kennison J.A."/>
            <person name="Ketchum K.A."/>
            <person name="Kimmel B.E."/>
            <person name="Kodira C.D."/>
            <person name="Kraft C.L."/>
            <person name="Kravitz S."/>
            <person name="Kulp D."/>
            <person name="Lai Z."/>
            <person name="Lasko P."/>
            <person name="Lei Y."/>
            <person name="Levitsky A.A."/>
            <person name="Li J.H."/>
            <person name="Li Z."/>
            <person name="Liang Y."/>
            <person name="Lin X."/>
            <person name="Liu X."/>
            <person name="Mattei B."/>
            <person name="McIntosh T.C."/>
            <person name="McLeod M.P."/>
            <person name="McPherson D."/>
            <person name="Merkulov G."/>
            <person name="Milshina N.V."/>
            <person name="Mobarry C."/>
            <person name="Morris J."/>
            <person name="Moshrefi A."/>
            <person name="Mount S.M."/>
            <person name="Moy M."/>
            <person name="Murphy B."/>
            <person name="Murphy L."/>
            <person name="Muzny D.M."/>
            <person name="Nelson D.L."/>
            <person name="Nelson D.R."/>
            <person name="Nelson K.A."/>
            <person name="Nixon K."/>
            <person name="Nusskern D.R."/>
            <person name="Pacleb J.M."/>
            <person name="Palazzolo M."/>
            <person name="Pittman G.S."/>
            <person name="Pan S."/>
            <person name="Pollard J."/>
            <person name="Puri V."/>
            <person name="Reese M.G."/>
            <person name="Reinert K."/>
            <person name="Remington K."/>
            <person name="Saunders R.D.C."/>
            <person name="Scheeler F."/>
            <person name="Shen H."/>
            <person name="Shue B.C."/>
            <person name="Siden-Kiamos I."/>
            <person name="Simpson M."/>
            <person name="Skupski M.P."/>
            <person name="Smith T.J."/>
            <person name="Spier E."/>
            <person name="Spradling A.C."/>
            <person name="Stapleton M."/>
            <person name="Strong R."/>
            <person name="Sun E."/>
            <person name="Svirskas R."/>
            <person name="Tector C."/>
            <person name="Turner R."/>
            <person name="Venter E."/>
            <person name="Wang A.H."/>
            <person name="Wang X."/>
            <person name="Wang Z.-Y."/>
            <person name="Wassarman D.A."/>
            <person name="Weinstock G.M."/>
            <person name="Weissenbach J."/>
            <person name="Williams S.M."/>
            <person name="Woodage T."/>
            <person name="Worley K.C."/>
            <person name="Wu D."/>
            <person name="Yang S."/>
            <person name="Yao Q.A."/>
            <person name="Ye J."/>
            <person name="Yeh R.-F."/>
            <person name="Zaveri J.S."/>
            <person name="Zhan M."/>
            <person name="Zhang G."/>
            <person name="Zhao Q."/>
            <person name="Zheng L."/>
            <person name="Zheng X.H."/>
            <person name="Zhong F.N."/>
            <person name="Zhong W."/>
            <person name="Zhou X."/>
            <person name="Zhu S.C."/>
            <person name="Zhu X."/>
            <person name="Smith H.O."/>
            <person name="Gibbs R.A."/>
            <person name="Myers E.W."/>
            <person name="Rubin G.M."/>
            <person name="Venter J.C."/>
        </authorList>
    </citation>
    <scope>NUCLEOTIDE SEQUENCE [LARGE SCALE GENOMIC DNA]</scope>
    <source>
        <strain>Berkeley</strain>
    </source>
</reference>
<reference key="4">
    <citation type="journal article" date="2002" name="Genome Biol.">
        <title>Annotation of the Drosophila melanogaster euchromatic genome: a systematic review.</title>
        <authorList>
            <person name="Misra S."/>
            <person name="Crosby M.A."/>
            <person name="Mungall C.J."/>
            <person name="Matthews B.B."/>
            <person name="Campbell K.S."/>
            <person name="Hradecky P."/>
            <person name="Huang Y."/>
            <person name="Kaminker J.S."/>
            <person name="Millburn G.H."/>
            <person name="Prochnik S.E."/>
            <person name="Smith C.D."/>
            <person name="Tupy J.L."/>
            <person name="Whitfield E.J."/>
            <person name="Bayraktaroglu L."/>
            <person name="Berman B.P."/>
            <person name="Bettencourt B.R."/>
            <person name="Celniker S.E."/>
            <person name="de Grey A.D.N.J."/>
            <person name="Drysdale R.A."/>
            <person name="Harris N.L."/>
            <person name="Richter J."/>
            <person name="Russo S."/>
            <person name="Schroeder A.J."/>
            <person name="Shu S.Q."/>
            <person name="Stapleton M."/>
            <person name="Yamada C."/>
            <person name="Ashburner M."/>
            <person name="Gelbart W.M."/>
            <person name="Rubin G.M."/>
            <person name="Lewis S.E."/>
        </authorList>
    </citation>
    <scope>GENOME REANNOTATION</scope>
    <source>
        <strain>Berkeley</strain>
    </source>
</reference>
<reference key="5">
    <citation type="journal article" date="2002" name="Genome Biol.">
        <title>A Drosophila full-length cDNA resource.</title>
        <authorList>
            <person name="Stapleton M."/>
            <person name="Carlson J.W."/>
            <person name="Brokstein P."/>
            <person name="Yu C."/>
            <person name="Champe M."/>
            <person name="George R.A."/>
            <person name="Guarin H."/>
            <person name="Kronmiller B."/>
            <person name="Pacleb J.M."/>
            <person name="Park S."/>
            <person name="Wan K.H."/>
            <person name="Rubin G.M."/>
            <person name="Celniker S.E."/>
        </authorList>
    </citation>
    <scope>NUCLEOTIDE SEQUENCE [LARGE SCALE MRNA]</scope>
    <source>
        <strain>Berkeley</strain>
        <tissue>Embryo</tissue>
    </source>
</reference>
<reference key="6">
    <citation type="journal article" date="2018" name="Cell Rep.">
        <title>Perineurial Barrier Glia Physically Respond to Alcohol in an Akap200-Dependent Manner to Promote Tolerance.</title>
        <authorList>
            <person name="Parkhurst S.J."/>
            <person name="Adhikari P."/>
            <person name="Navarrete J.S."/>
            <person name="Legendre A."/>
            <person name="Manansala M."/>
            <person name="Wolf F.W."/>
        </authorList>
    </citation>
    <scope>FUNCTION</scope>
</reference>
<reference key="7">
    <citation type="journal article" date="2018" name="Elife">
        <title>A kinase-dependent feedforward loop affects CREBB stability and long term memory formation.</title>
        <authorList>
            <person name="Lee P.T."/>
            <person name="Lin G."/>
            <person name="Lin W.W."/>
            <person name="Diao F."/>
            <person name="White B.H."/>
            <person name="Bellen H.J."/>
        </authorList>
    </citation>
    <scope>FUNCTION</scope>
    <scope>CATALYTIC ACTIVITY</scope>
</reference>
<sequence>MGNNATTSNKKVDAAETVKEFLEQAKEEFEDKWRRNPTNTAALDDFERIKTLGTGSFGRVMIVQHKPTKDYYAMKILDKQKVVKLKQVEHTLNEKRILQAIQFPFLVSLRYHFKDNSNLYMVLEYVPGGEMFSHLRKVGRFSEPHSRFYAAQIVLAFEYLHYLDLIYRDLKPENLLIDSQGYLKVTDFGFAKRVKGRTWTLCGTPEYLAPEIILSKGYNKAVDWWALGVLVYEMAAGYPPFFADQPIQIYEKIVSGKVRFPSHFGSDLKDLLRNLLQVDLTKRYGNLKAGVNDIKNQKWFASTDWIAIFQKKIEAPFIPRCKGPGDTSNFDDYEEEALRISSTEKCAKEFAEF</sequence>
<gene>
    <name type="primary">Pka-C1</name>
    <name type="synonym">CdkA</name>
    <name type="synonym">DC0</name>
    <name type="ORF">CG4379</name>
</gene>
<accession>P12370</accession>
<accession>A4V0I0</accession>
<accession>Q9VL99</accession>
<keyword id="KW-0067">ATP-binding</keyword>
<keyword id="KW-0114">cAMP</keyword>
<keyword id="KW-0418">Kinase</keyword>
<keyword id="KW-0449">Lipoprotein</keyword>
<keyword id="KW-0519">Myristate</keyword>
<keyword id="KW-0547">Nucleotide-binding</keyword>
<keyword id="KW-0597">Phosphoprotein</keyword>
<keyword id="KW-1185">Reference proteome</keyword>
<keyword id="KW-0723">Serine/threonine-protein kinase</keyword>
<keyword id="KW-0808">Transferase</keyword>
<protein>
    <recommendedName>
        <fullName evidence="8">cAMP-dependent protein kinase catalytic subunit 1</fullName>
        <shortName>PKA C</shortName>
        <ecNumber evidence="9">2.7.11.11</ecNumber>
    </recommendedName>
    <alternativeName>
        <fullName evidence="7">Protein kinase DC0</fullName>
    </alternativeName>
</protein>
<feature type="initiator methionine" description="Removed" evidence="1">
    <location>
        <position position="1"/>
    </location>
</feature>
<feature type="chain" id="PRO_0000086069" description="cAMP-dependent protein kinase catalytic subunit 1">
    <location>
        <begin position="2"/>
        <end position="353"/>
    </location>
</feature>
<feature type="domain" description="Protein kinase" evidence="2">
    <location>
        <begin position="46"/>
        <end position="300"/>
    </location>
</feature>
<feature type="domain" description="AGC-kinase C-terminal" evidence="3">
    <location>
        <begin position="301"/>
        <end position="353"/>
    </location>
</feature>
<feature type="active site" description="Proton acceptor" evidence="2 4">
    <location>
        <position position="169"/>
    </location>
</feature>
<feature type="binding site" evidence="2">
    <location>
        <begin position="52"/>
        <end position="60"/>
    </location>
    <ligand>
        <name>ATP</name>
        <dbReference type="ChEBI" id="CHEBI:30616"/>
    </ligand>
</feature>
<feature type="binding site" evidence="2">
    <location>
        <position position="75"/>
    </location>
    <ligand>
        <name>ATP</name>
        <dbReference type="ChEBI" id="CHEBI:30616"/>
    </ligand>
</feature>
<feature type="lipid moiety-binding region" description="N-myristoyl glycine" evidence="1">
    <location>
        <position position="2"/>
    </location>
</feature>